<keyword id="KW-0997">Cell inner membrane</keyword>
<keyword id="KW-1003">Cell membrane</keyword>
<keyword id="KW-0143">Chaperone</keyword>
<keyword id="KW-1015">Disulfide bond</keyword>
<keyword id="KW-0249">Electron transport</keyword>
<keyword id="KW-0472">Membrane</keyword>
<keyword id="KW-0560">Oxidoreductase</keyword>
<keyword id="KW-0676">Redox-active center</keyword>
<keyword id="KW-0812">Transmembrane</keyword>
<keyword id="KW-1133">Transmembrane helix</keyword>
<keyword id="KW-0813">Transport</keyword>
<accession>Q822U2</accession>
<evidence type="ECO:0000255" key="1">
    <source>
        <dbReference type="HAMAP-Rule" id="MF_00287"/>
    </source>
</evidence>
<dbReference type="EMBL" id="AE015925">
    <property type="protein sequence ID" value="AAP05329.1"/>
    <property type="molecule type" value="Genomic_DNA"/>
</dbReference>
<dbReference type="RefSeq" id="WP_011006544.1">
    <property type="nucleotide sequence ID" value="NC_003361.3"/>
</dbReference>
<dbReference type="STRING" id="227941.CCA_00587"/>
<dbReference type="KEGG" id="cca:CCA_00587"/>
<dbReference type="eggNOG" id="COG1495">
    <property type="taxonomic scope" value="Bacteria"/>
</dbReference>
<dbReference type="HOGENOM" id="CLU_128688_0_0_0"/>
<dbReference type="OrthoDB" id="158402at2"/>
<dbReference type="Proteomes" id="UP000002193">
    <property type="component" value="Chromosome"/>
</dbReference>
<dbReference type="GO" id="GO:0005886">
    <property type="term" value="C:plasma membrane"/>
    <property type="evidence" value="ECO:0007669"/>
    <property type="project" value="UniProtKB-SubCell"/>
</dbReference>
<dbReference type="GO" id="GO:0015035">
    <property type="term" value="F:protein-disulfide reductase activity"/>
    <property type="evidence" value="ECO:0007669"/>
    <property type="project" value="UniProtKB-UniRule"/>
</dbReference>
<dbReference type="GO" id="GO:0006457">
    <property type="term" value="P:protein folding"/>
    <property type="evidence" value="ECO:0007669"/>
    <property type="project" value="InterPro"/>
</dbReference>
<dbReference type="Gene3D" id="1.20.1550.10">
    <property type="entry name" value="DsbB-like"/>
    <property type="match status" value="1"/>
</dbReference>
<dbReference type="HAMAP" id="MF_00287">
    <property type="entry name" value="BdbC"/>
    <property type="match status" value="1"/>
</dbReference>
<dbReference type="InterPro" id="IPR003752">
    <property type="entry name" value="DiS_bond_form_DsbB/BdbC"/>
</dbReference>
<dbReference type="InterPro" id="IPR012187">
    <property type="entry name" value="Disulphide_bond_form_BdbC"/>
</dbReference>
<dbReference type="InterPro" id="IPR023380">
    <property type="entry name" value="DsbB-like_sf"/>
</dbReference>
<dbReference type="NCBIfam" id="NF001863">
    <property type="entry name" value="PRK00611.1"/>
    <property type="match status" value="1"/>
</dbReference>
<dbReference type="PANTHER" id="PTHR43469">
    <property type="entry name" value="DISULFIDE FORMATION PROTEIN-RELATED"/>
    <property type="match status" value="1"/>
</dbReference>
<dbReference type="PANTHER" id="PTHR43469:SF1">
    <property type="entry name" value="SPBETA PROPHAGE-DERIVED DISULFIDE BOND FORMATION PROTEIN B"/>
    <property type="match status" value="1"/>
</dbReference>
<dbReference type="Pfam" id="PF02600">
    <property type="entry name" value="DsbB"/>
    <property type="match status" value="1"/>
</dbReference>
<dbReference type="PIRSF" id="PIRSF036659">
    <property type="entry name" value="BdbC"/>
    <property type="match status" value="1"/>
</dbReference>
<dbReference type="SUPFAM" id="SSF158442">
    <property type="entry name" value="DsbB-like"/>
    <property type="match status" value="1"/>
</dbReference>
<name>BDBC_CHLCV</name>
<gene>
    <name type="ordered locus">CCA_00587</name>
</gene>
<reference key="1">
    <citation type="journal article" date="2003" name="Nucleic Acids Res.">
        <title>Genome sequence of Chlamydophila caviae (Chlamydia psittaci GPIC): examining the role of niche-specific genes in the evolution of the Chlamydiaceae.</title>
        <authorList>
            <person name="Read T.D."/>
            <person name="Myers G.S.A."/>
            <person name="Brunham R.C."/>
            <person name="Nelson W.C."/>
            <person name="Paulsen I.T."/>
            <person name="Heidelberg J.F."/>
            <person name="Holtzapple E.K."/>
            <person name="Khouri H.M."/>
            <person name="Federova N.B."/>
            <person name="Carty H.A."/>
            <person name="Umayam L.A."/>
            <person name="Haft D.H."/>
            <person name="Peterson J.D."/>
            <person name="Beanan M.J."/>
            <person name="White O."/>
            <person name="Salzberg S.L."/>
            <person name="Hsia R.-C."/>
            <person name="McClarty G."/>
            <person name="Rank R.G."/>
            <person name="Bavoil P.M."/>
            <person name="Fraser C.M."/>
        </authorList>
    </citation>
    <scope>NUCLEOTIDE SEQUENCE [LARGE SCALE GENOMIC DNA]</scope>
    <source>
        <strain>ATCC VR-813 / DSM 19441 / 03DC25 / GPIC</strain>
    </source>
</reference>
<protein>
    <recommendedName>
        <fullName evidence="1">Probable disulfide formation protein</fullName>
    </recommendedName>
    <alternativeName>
        <fullName evidence="1">Disulfide oxidoreductase</fullName>
    </alternativeName>
    <alternativeName>
        <fullName evidence="1">Thiol-disulfide oxidoreductase</fullName>
    </alternativeName>
</protein>
<feature type="chain" id="PRO_0000059379" description="Probable disulfide formation protein">
    <location>
        <begin position="1"/>
        <end position="136"/>
    </location>
</feature>
<feature type="transmembrane region" description="Helical" evidence="1">
    <location>
        <begin position="7"/>
        <end position="26"/>
    </location>
</feature>
<feature type="transmembrane region" description="Helical" evidence="1">
    <location>
        <begin position="41"/>
        <end position="60"/>
    </location>
</feature>
<feature type="transmembrane region" description="Helical" evidence="1">
    <location>
        <begin position="67"/>
        <end position="84"/>
    </location>
</feature>
<feature type="transmembrane region" description="Helical" evidence="1">
    <location>
        <begin position="109"/>
        <end position="133"/>
    </location>
</feature>
<feature type="disulfide bond" description="Redox-active" evidence="1">
    <location>
        <begin position="36"/>
        <end position="39"/>
    </location>
</feature>
<feature type="disulfide bond" description="Redox-active" evidence="1">
    <location>
        <begin position="96"/>
        <end position="101"/>
    </location>
</feature>
<proteinExistence type="inferred from homology"/>
<comment type="function">
    <text evidence="1">Required for disulfide bond formation in some proteins.</text>
</comment>
<comment type="subcellular location">
    <subcellularLocation>
        <location evidence="1">Cell inner membrane</location>
        <topology evidence="1">Multi-pass membrane protein</topology>
    </subcellularLocation>
</comment>
<comment type="similarity">
    <text evidence="1">Belongs to the DsbB family. BdbC subfamily.</text>
</comment>
<sequence>MIRFLRNNALYFAWLICSTGTVMSIYYSYLLNIEPCVLCYYQRICLFPLSIILGIATYREDNLVKIYALPLSITGMVIAVYQICLQEISGMTIDICGRVSCSTKLFVFGFITVPMASALAFCAISCLLILSGSKKK</sequence>
<organism>
    <name type="scientific">Chlamydia caviae (strain ATCC VR-813 / DSM 19441 / 03DC25 / GPIC)</name>
    <name type="common">Chlamydophila caviae</name>
    <dbReference type="NCBI Taxonomy" id="227941"/>
    <lineage>
        <taxon>Bacteria</taxon>
        <taxon>Pseudomonadati</taxon>
        <taxon>Chlamydiota</taxon>
        <taxon>Chlamydiia</taxon>
        <taxon>Chlamydiales</taxon>
        <taxon>Chlamydiaceae</taxon>
        <taxon>Chlamydia/Chlamydophila group</taxon>
        <taxon>Chlamydia</taxon>
    </lineage>
</organism>